<name>HBOH_BURMA</name>
<reference key="1">
    <citation type="journal article" date="2004" name="Proc. Natl. Acad. Sci. U.S.A.">
        <title>Structural flexibility in the Burkholderia mallei genome.</title>
        <authorList>
            <person name="Nierman W.C."/>
            <person name="DeShazer D."/>
            <person name="Kim H.S."/>
            <person name="Tettelin H."/>
            <person name="Nelson K.E."/>
            <person name="Feldblyum T.V."/>
            <person name="Ulrich R.L."/>
            <person name="Ronning C.M."/>
            <person name="Brinkac L.M."/>
            <person name="Daugherty S.C."/>
            <person name="Davidsen T.D."/>
            <person name="DeBoy R.T."/>
            <person name="Dimitrov G."/>
            <person name="Dodson R.J."/>
            <person name="Durkin A.S."/>
            <person name="Gwinn M.L."/>
            <person name="Haft D.H."/>
            <person name="Khouri H.M."/>
            <person name="Kolonay J.F."/>
            <person name="Madupu R."/>
            <person name="Mohammoud Y."/>
            <person name="Nelson W.C."/>
            <person name="Radune D."/>
            <person name="Romero C.M."/>
            <person name="Sarria S."/>
            <person name="Selengut J."/>
            <person name="Shamblin C."/>
            <person name="Sullivan S.A."/>
            <person name="White O."/>
            <person name="Yu Y."/>
            <person name="Zafar N."/>
            <person name="Zhou L."/>
            <person name="Fraser C.M."/>
        </authorList>
    </citation>
    <scope>NUCLEOTIDE SEQUENCE [LARGE SCALE GENOMIC DNA]</scope>
    <source>
        <strain>ATCC 23344</strain>
    </source>
</reference>
<keyword id="KW-0378">Hydrolase</keyword>
<keyword id="KW-1185">Reference proteome</keyword>
<keyword id="KW-0964">Secreted</keyword>
<keyword id="KW-0732">Signal</keyword>
<comment type="function">
    <text evidence="1">Participates in the degradation of poly-3-hydroxybutyrate (PHB). It works downstream of poly(3-hydroxybutyrate) depolymerase, hydrolyzing D(-)-3-hydroxybutyrate oligomers of various length (3HB-oligomers) into 3HB-monomers.</text>
</comment>
<comment type="catalytic activity">
    <reaction evidence="1">
        <text>(3R)-hydroxybutanoate dimer + H2O = 2 (R)-3-hydroxybutanoate + H(+)</text>
        <dbReference type="Rhea" id="RHEA:10172"/>
        <dbReference type="ChEBI" id="CHEBI:10979"/>
        <dbReference type="ChEBI" id="CHEBI:10983"/>
        <dbReference type="ChEBI" id="CHEBI:15377"/>
        <dbReference type="ChEBI" id="CHEBI:15378"/>
        <dbReference type="EC" id="3.1.1.22"/>
    </reaction>
</comment>
<comment type="pathway">
    <text evidence="1">Lipid metabolism; butanoate metabolism.</text>
</comment>
<comment type="subcellular location">
    <subcellularLocation>
        <location evidence="1">Secreted</location>
    </subcellularLocation>
</comment>
<comment type="similarity">
    <text evidence="1">Belongs to the D-(-)-3-hydroxybutyrate oligomer hydrolase family.</text>
</comment>
<gene>
    <name type="ordered locus">BMA2028</name>
</gene>
<proteinExistence type="inferred from homology"/>
<dbReference type="EC" id="3.1.1.22" evidence="1"/>
<dbReference type="EMBL" id="CP000010">
    <property type="protein sequence ID" value="AAU49565.1"/>
    <property type="molecule type" value="Genomic_DNA"/>
</dbReference>
<dbReference type="RefSeq" id="WP_004186332.1">
    <property type="nucleotide sequence ID" value="NC_006348.1"/>
</dbReference>
<dbReference type="RefSeq" id="YP_103610.1">
    <property type="nucleotide sequence ID" value="NC_006348.1"/>
</dbReference>
<dbReference type="ESTHER" id="burps-hboh">
    <property type="family name" value="OHBut_olig_hydro_put"/>
</dbReference>
<dbReference type="GeneID" id="92979737"/>
<dbReference type="KEGG" id="bma:BMA2028"/>
<dbReference type="PATRIC" id="fig|243160.12.peg.2093"/>
<dbReference type="eggNOG" id="ENOG502Z8QU">
    <property type="taxonomic scope" value="Bacteria"/>
</dbReference>
<dbReference type="HOGENOM" id="CLU_420258_0_0_4"/>
<dbReference type="UniPathway" id="UPA00863"/>
<dbReference type="Proteomes" id="UP000006693">
    <property type="component" value="Chromosome 1"/>
</dbReference>
<dbReference type="GO" id="GO:0005615">
    <property type="term" value="C:extracellular space"/>
    <property type="evidence" value="ECO:0007669"/>
    <property type="project" value="InterPro"/>
</dbReference>
<dbReference type="GO" id="GO:0047989">
    <property type="term" value="F:hydroxybutyrate-dimer hydrolase activity"/>
    <property type="evidence" value="ECO:0007669"/>
    <property type="project" value="UniProtKB-UniRule"/>
</dbReference>
<dbReference type="GO" id="GO:0019605">
    <property type="term" value="P:butyrate metabolic process"/>
    <property type="evidence" value="ECO:0007669"/>
    <property type="project" value="UniProtKB-UniRule"/>
</dbReference>
<dbReference type="HAMAP" id="MF_01906">
    <property type="entry name" value="3HBOH"/>
    <property type="match status" value="1"/>
</dbReference>
<dbReference type="InterPro" id="IPR029058">
    <property type="entry name" value="AB_hydrolase_fold"/>
</dbReference>
<dbReference type="InterPro" id="IPR016582">
    <property type="entry name" value="OHBut_olig_hydro_put"/>
</dbReference>
<dbReference type="Pfam" id="PF10605">
    <property type="entry name" value="3HBOH"/>
    <property type="match status" value="1"/>
</dbReference>
<dbReference type="PIRSF" id="PIRSF011409">
    <property type="entry name" value="HObutyrate_olig_hydrol"/>
    <property type="match status" value="1"/>
</dbReference>
<dbReference type="SUPFAM" id="SSF53474">
    <property type="entry name" value="alpha/beta-Hydrolases"/>
    <property type="match status" value="1"/>
</dbReference>
<accession>Q62I60</accession>
<evidence type="ECO:0000255" key="1">
    <source>
        <dbReference type="HAMAP-Rule" id="MF_01906"/>
    </source>
</evidence>
<feature type="signal peptide" evidence="1">
    <location>
        <begin position="1"/>
        <end position="33"/>
    </location>
</feature>
<feature type="chain" id="PRO_0000314415" description="D-(-)-3-hydroxybutyrate oligomer hydrolase">
    <location>
        <begin position="34"/>
        <end position="699"/>
    </location>
</feature>
<feature type="active site" description="Charge relay system" evidence="1">
    <location>
        <position position="311"/>
    </location>
</feature>
<protein>
    <recommendedName>
        <fullName evidence="1">D-(-)-3-hydroxybutyrate oligomer hydrolase</fullName>
        <shortName evidence="1">3HB-oligomer hydrolase</shortName>
        <shortName evidence="1">3HBOH</shortName>
        <ecNumber evidence="1">3.1.1.22</ecNumber>
    </recommendedName>
</protein>
<organism>
    <name type="scientific">Burkholderia mallei (strain ATCC 23344)</name>
    <dbReference type="NCBI Taxonomy" id="243160"/>
    <lineage>
        <taxon>Bacteria</taxon>
        <taxon>Pseudomonadati</taxon>
        <taxon>Pseudomonadota</taxon>
        <taxon>Betaproteobacteria</taxon>
        <taxon>Burkholderiales</taxon>
        <taxon>Burkholderiaceae</taxon>
        <taxon>Burkholderia</taxon>
        <taxon>pseudomallei group</taxon>
    </lineage>
</organism>
<sequence length="699" mass="71704">MTAIRGGSRRAPGLALALLGGVLLGACHGDENAQVNALPGFVSGSVRKTAYDGASDDLLTAGLGKTGLGSDTRPGFANPAQPSAAELRRLAIYSNYRALVDITPNGGYGRFWGPNVDLAGNDTLGEGKIAGTEYLAYSDDGSGRKNVTLLVQVPASFDPANPCIVTATASGSRGVYGAIAAAGEWGLKRGCAVAYNDKGGGNGAHEIGTGVVTLIDGTLATASSAGSSSLFTASESSSTLAAFNSAFPNRYAYKHAHSQQNPEQDWGRVTLQAVEFAYWALNEQFGPVVDGTRHGIRYRPGDITTIAASVSNGGGSALAAAEQDTRGWITAVVVGEPQINVRMTPGVTVEQGGAPVPSFGRPLADYATLANLLQPCAAAAVAATGAPYLSALPMGVTQSIRTQRCATLAAAGLVSGADTASQASDALAQLYAAGYLADSDLLQAPMWDSQAMPAIAVTYANAYTRSRVTDNLCNFSFATTNPVTGAVAAPAVSPMTNLFGAGNGVPPTNGINLVFNGASGGVDHRLATPDASFAGAFCLRQLWTANQLGIGTNVDAVRVAANLQHKPAIIVHGRSDALVPVNHASRAYVAQNSATEGRASQLSFYEVTNGQHFDAFLSVPGFDTRFVPVHYYDEQALNLMWNHLKSGAPLPPSQVIRTVPRGGVPGAAPALSTANLPPIVQSPGANAIAVNAGVIDVPL</sequence>